<comment type="function">
    <text evidence="1">RNA-dependent RNA polymerase, which is responsible for the replication and transcription of the viral RNA genome using antigenomic RNA as an intermediate. During transcription, synthesizes subgenomic RNAs and assures their capping by a cap-snatching mechanism, which involves the endonuclease activity cleaving the host capped pre-mRNAs. These short capped RNAs are then used as primers for viral transcription. The 3'-end of subgenomic mRNAs molecules are heterogeneous and not polyadenylated. The replicase function is to direct synthesis of antigenomic and genomic RNA which are encapsidated and non capped. As a consequence of the use of the same enzyme for both transcription and replication, these mechanisms need to be well coordinated. These processes may be regulated by proteins N and Z in a dose-dependent manner. Z protein inhibits the viral polymerase L und thus the viral transcription and RNA synthesis.</text>
</comment>
<comment type="catalytic activity">
    <reaction evidence="1">
        <text>RNA(n) + a ribonucleoside 5'-triphosphate = RNA(n+1) + diphosphate</text>
        <dbReference type="Rhea" id="RHEA:21248"/>
        <dbReference type="Rhea" id="RHEA-COMP:14527"/>
        <dbReference type="Rhea" id="RHEA-COMP:17342"/>
        <dbReference type="ChEBI" id="CHEBI:33019"/>
        <dbReference type="ChEBI" id="CHEBI:61557"/>
        <dbReference type="ChEBI" id="CHEBI:140395"/>
        <dbReference type="EC" id="2.7.7.48"/>
    </reaction>
</comment>
<comment type="cofactor">
    <cofactor evidence="1">
        <name>Mn(2+)</name>
        <dbReference type="ChEBI" id="CHEBI:29035"/>
    </cofactor>
    <text evidence="1">For endonuclease activity. Binds 2 Mn(2+) ions in the active site. The divalent metal ions are crucial for catalytic activity.</text>
</comment>
<comment type="cofactor">
    <cofactor evidence="1">
        <name>Mg(2+)</name>
        <dbReference type="ChEBI" id="CHEBI:18420"/>
    </cofactor>
    <cofactor evidence="1">
        <name>Mn(2+)</name>
        <dbReference type="ChEBI" id="CHEBI:29035"/>
    </cofactor>
    <text evidence="1">For polymerase activity.</text>
</comment>
<comment type="subunit">
    <text evidence="1">Homomultimer; the oligomeric structure is essential for the polymerase activity. Interacts with nucleoprotein N. Interacts with protein Z; this interaction inhibits viral transcription and replication, Z partially blocks the product exit tunnel for the releasing nascent RNA product.</text>
</comment>
<comment type="subcellular location">
    <subcellularLocation>
        <location evidence="1">Virion</location>
    </subcellularLocation>
    <subcellularLocation>
        <location evidence="1">Host cytoplasm</location>
    </subcellularLocation>
</comment>
<comment type="domain">
    <text evidence="1">The N-terminus contains the endonuclease activity (endoN). The central region contains the RdRp activity.</text>
</comment>
<comment type="miscellaneous">
    <text evidence="1">Classified as His(-) endonuclease since it does not have a histidine upstream of the active site that coordinates the first cation. His(-) endonucleases display very low activity in vitro, although they are clearly active in vivo.</text>
</comment>
<comment type="similarity">
    <text evidence="1">Belongs to the Bunyavirales RNA polymerase family.</text>
</comment>
<organismHost>
    <name type="scientific">Homo sapiens</name>
    <name type="common">Human</name>
    <dbReference type="NCBI Taxonomy" id="9606"/>
</organismHost>
<organismHost>
    <name type="scientific">Zygodontomys brevicauda</name>
    <dbReference type="NCBI Taxonomy" id="157541"/>
</organismHost>
<name>L_GTOVV</name>
<reference key="1">
    <citation type="submission" date="2003-08" db="EMBL/GenBank/DDBJ databases">
        <authorList>
            <person name="Bowen M.D."/>
            <person name="Thurman K."/>
            <person name="Minor E."/>
            <person name="Meyer R.F."/>
            <person name="Malfatti S.A."/>
            <person name="Do L.H."/>
            <person name="Smith K.L."/>
            <person name="McCready P.M."/>
            <person name="Chain P.S.G."/>
        </authorList>
    </citation>
    <scope>NUCLEOTIDE SEQUENCE [GENOMIC RNA]</scope>
</reference>
<reference key="2">
    <citation type="journal article" date="2003" name="Virology">
        <title>New insights into the evolutionary relationships between arenaviruses provided by comparative analysis of small and large segment sequences.</title>
        <authorList>
            <person name="Charrel R.N."/>
            <person name="Lemasson J.J."/>
            <person name="Garbutt M."/>
            <person name="Khelifa R."/>
            <person name="De Micco P."/>
            <person name="Feldmann H."/>
            <person name="de Lamballerie X."/>
        </authorList>
    </citation>
    <scope>NUCLEOTIDE SEQUENCE [GENOMIC RNA]</scope>
</reference>
<reference key="3">
    <citation type="journal article" date="2008" name="Curr. Opin. Microbiol.">
        <title>Phylogeny of the genus Arenavirus.</title>
        <authorList>
            <person name="Charrel R.N."/>
            <person name="de Lamballerie X."/>
            <person name="Emonet S."/>
        </authorList>
    </citation>
    <scope>NUCLEOTIDE SEQUENCE [GENOMIC RNA]</scope>
</reference>
<reference key="4">
    <citation type="journal article" date="2017" name="Crit. Rev. Microbiol.">
        <title>Bunyaviridae RdRps: structure, motifs, and RNA synthesis machinery.</title>
        <authorList>
            <person name="Amroun A."/>
            <person name="Priet S."/>
            <person name="de Lamballerie X."/>
            <person name="Querat G."/>
        </authorList>
    </citation>
    <scope>REVIEW</scope>
</reference>
<reference key="5">
    <citation type="journal article" date="2020" name="Trends Microbiol.">
        <title>The Cap-Snatching Mechanism of Bunyaviruses.</title>
        <authorList>
            <person name="Olschewski S."/>
            <person name="Cusack S."/>
            <person name="Rosenthal M."/>
        </authorList>
    </citation>
    <scope>REVIEW</scope>
</reference>
<organism>
    <name type="scientific">Guanarito mammarenavirus (isolate Human/Venezuela/NH-95551/1990)</name>
    <name type="common">GTOV</name>
    <dbReference type="NCBI Taxonomy" id="3052307"/>
    <lineage>
        <taxon>Viruses</taxon>
        <taxon>Riboviria</taxon>
        <taxon>Orthornavirae</taxon>
        <taxon>Negarnaviricota</taxon>
        <taxon>Polyploviricotina</taxon>
        <taxon>Ellioviricetes</taxon>
        <taxon>Bunyavirales</taxon>
        <taxon>Arenaviridae</taxon>
        <taxon>Mammarenavirus</taxon>
    </lineage>
</organism>
<sequence>MDEKVFVLKDFIRRQVPDIPELSYQKEALLSQVEVPMVLTEGFKLLSCLVEIESCRKNSCECNFEQKFVDTILSENGVVAPTLPKVIPDGYRFFNKTLILLETFVRVNPEEFEKKWKTDMAKLLSLKEDIHRTGITLVPVVDGRGNYNTDLLPDWATERFRWLLIDLLRESRGAPTMEIEDQEYHRLIHSLSKTSNQSLGFENIECLKRVHLNYEERLNEQLLKDIVGEVRESKIREELIKLKTWYREEIYRKGLGNFVQTDRKSLLQTLVLSSAHSDSLAPECPMCCSKILDLCYQLSMRIANQTSLENNFDEPPLPTTQIEKVYLSLLSACNKIKGKKVFNTRRNTLLFLDLIILNFVAHVYKTQPSEMETLKKAGLIIGEMLLLPNDRVLDILVARRLLLKKVESCCNWLDRCRHLLRKEEPVLWDCVSEFTNVPDFELLLSLAEELCSEKPVMHYKPPSSLIGDCAHKDLMSMSDGEFESLFKCLSHISLSLVNSMKTSFSSRLLVNEKDYKRYYGTVRLKECYVQRFFLRVGLYGLLFYQKTGEKSRCYSLYLSDKGNLVELGSFYSDPKRFFLPIFSEFVLLATCAEMLSWLDFDEKLVDAVTPLLKILVLSILSSPTKRSQTFLQGLRYFIMAYVNQAHHIQLMSKLAVECKSASDVLIQRLSVKIVDMVLSDGSDPDMHMTRKFKFVLNVSYLCHLITKETPDRLTDQIKCFEKFMEPKLEFGSLIVNPSLNGFLSKEQEDVMIEGVEKFFSKELLTVEDLKRPGVSRELLSYCVSLFNKGRLRVNGTLGTDPYRPSFTSTALDLSSNKSVVIPKLNEVGEIVSEYDKQKLVSTCITSMAERFKTKGRYNLDPDTIDFLIMRNLTNLLSARKLDSSKKEELSLLYEHLSEDVMKAFEEIKYEVEITLSKMRLSRELECGHKKPCTLEGVWAPFNVLKVIRSETSVHEIRDFDPDLLGEDVYEKLCVAVYDSPLRPTFFLEKPLDICPLELLLKNLTTKSYEDDEFFDCFKYILIQAGFDQRLGAYEHKNRSRLGLSEEAFRLKEDVRVSNRQSNSEAIADRLDKSFFTSAALRNLCFYSEESPTEYTCISPNVGNLKFGLSYKEQVGSNRELYVGDLNTKMMTRLVEDFTEAVANSMNYTCLNSEKEFERAICDMKMAVNNGDLCCSLDHSKWGPFMSPALFHAFFGALKFKISKTGEQVDLGPVLNVLKWHLHKAVEVPISVAEAYCTGMLKRRLGLMSLSCQSVCEEFFHQKLLLEEGVPSHIMSVLDMGQGILHNSSDLYGLITEQFINYCLDFLFDVIPVSYTSSDDQITTFKLPTMSSSEDGLDGFDWLELLCFHDFLSSKFNKFVSPKSVSGTFVAEFKSRFFVMGEETPLLTKFVSAALHNVKCKTPTQLAETIDTICDQCVANGVGIEIVTKISERVNRLIRYSGYPQTPFLAVEKQDVKDWTDGSRGYRLQRNIEHYLQGSEQLEFVRKCAKKVLLKIKKGQVFEEYLVQLIGKDGDDALKGFLSYAGCESDEIKDVLKYRWLNLSANGDLRLVLRTKLMSTRRVLEREQIPTLIKTLQSKLSKNFTKGVKKILAESINKSAFQSSVASGFIGFCKSMGSKCVRDGSGGFMYIREVLNKQRVCPCEICAQNPGIIFCSDALTLIPEFSRSILWDYFSLVLTNACELGEWVFSSVQPPKVPILLNNPNLFWAVKPRGTRLIEDQLGLGHVLQSVRRSYPKVFEEHLVPFMNDLQVSRTTDFTRLRYLDVCVALDMMNENLGIVSHLLKAKDNSIYIVKQSECAVAHIRQVEYVNQELGLSPQQICSNFKIQLVFSSMINPLVITTSVLKSFFWFNEVLNLEDESQIDVGELTDFTILIKKYNLNRAMMLDDLTMGYVVSTISEPTIHLVSLKRNSNSIVGEQNSEMLHGEQVEDMYSIVLHIQLEHKRHSTKYHLSRTVVYSYTVECETNITDIEKEPSLATVKNVVLRASGSIEGHQFLDGVNLVASQPIFTGKKVINLSELLADSEITETYKEGDAVGSILLNFGTFYEHIDDRYAYEIVGPECSDSPLVLDGGSILADGKKLSSIKVELTGDVILKALGALESEKEVQSLLTGLWPFIRINNLKVKMAQEDFLLMYEMHRESLLKSLEVFSEWCEFVDFSVCYSKSLRDLVISDSSGSLRLKGITCKPINLSNSVTEIE</sequence>
<proteinExistence type="inferred from homology"/>
<accession>Q6UY70</accession>
<accession>Q6XQI7</accession>
<keyword id="KW-1157">Cap snatching</keyword>
<keyword id="KW-1035">Host cytoplasm</keyword>
<keyword id="KW-0378">Hydrolase</keyword>
<keyword id="KW-0460">Magnesium</keyword>
<keyword id="KW-0464">Manganese</keyword>
<keyword id="KW-0479">Metal-binding</keyword>
<keyword id="KW-0547">Nucleotide-binding</keyword>
<keyword id="KW-0548">Nucleotidyltransferase</keyword>
<keyword id="KW-0696">RNA-directed RNA polymerase</keyword>
<keyword id="KW-0808">Transferase</keyword>
<keyword id="KW-0693">Viral RNA replication</keyword>
<keyword id="KW-0946">Virion</keyword>
<feature type="chain" id="PRO_0000361636" description="RNA-directed RNA polymerase L">
    <location>
        <begin position="1"/>
        <end position="2198"/>
    </location>
</feature>
<feature type="domain" description="RdRp catalytic" evidence="1">
    <location>
        <begin position="1161"/>
        <end position="1359"/>
    </location>
</feature>
<feature type="region of interest" description="Endonuclease" evidence="1">
    <location>
        <begin position="26"/>
        <end position="284"/>
    </location>
</feature>
<feature type="active site" evidence="1">
    <location>
        <position position="115"/>
    </location>
</feature>
<feature type="binding site" evidence="1">
    <location>
        <position position="51"/>
    </location>
    <ligand>
        <name>Mn(2+)</name>
        <dbReference type="ChEBI" id="CHEBI:29035"/>
        <label>1</label>
    </ligand>
</feature>
<feature type="binding site" evidence="1">
    <location>
        <position position="89"/>
    </location>
    <ligand>
        <name>Mn(2+)</name>
        <dbReference type="ChEBI" id="CHEBI:29035"/>
        <label>1</label>
    </ligand>
</feature>
<feature type="binding site" evidence="1">
    <location>
        <position position="89"/>
    </location>
    <ligand>
        <name>Mn(2+)</name>
        <dbReference type="ChEBI" id="CHEBI:29035"/>
        <label>2</label>
    </ligand>
</feature>
<feature type="binding site" evidence="1">
    <location>
        <position position="102"/>
    </location>
    <ligand>
        <name>Mn(2+)</name>
        <dbReference type="ChEBI" id="CHEBI:29035"/>
        <label>1</label>
    </ligand>
</feature>
<feature type="binding site" evidence="1">
    <location>
        <position position="1319"/>
    </location>
    <ligand>
        <name>Mg(2+)</name>
        <dbReference type="ChEBI" id="CHEBI:18420"/>
        <note>catalytic; for RdRp activity</note>
    </ligand>
</feature>
<feature type="sequence variant">
    <original>V</original>
    <variation>E</variation>
    <location>
        <position position="536"/>
    </location>
</feature>
<feature type="sequence variant">
    <original>S</original>
    <variation>P</variation>
    <location>
        <position position="1846"/>
    </location>
</feature>
<protein>
    <recommendedName>
        <fullName evidence="1">RNA-directed RNA polymerase L</fullName>
        <shortName evidence="1">Protein L</shortName>
        <ecNumber evidence="1">2.7.7.48</ecNumber>
    </recommendedName>
    <alternativeName>
        <fullName evidence="1">Large structural protein</fullName>
    </alternativeName>
    <alternativeName>
        <fullName evidence="1">Replicase</fullName>
    </alternativeName>
    <alternativeName>
        <fullName evidence="1">Transcriptase</fullName>
    </alternativeName>
    <domain>
        <recommendedName>
            <fullName evidence="1">cap-snatching endonuclease</fullName>
            <ecNumber evidence="1">3.1.-.-</ecNumber>
        </recommendedName>
    </domain>
</protein>
<evidence type="ECO:0000255" key="1">
    <source>
        <dbReference type="HAMAP-Rule" id="MF_04086"/>
    </source>
</evidence>
<dbReference type="EC" id="2.7.7.48" evidence="1"/>
<dbReference type="EC" id="3.1.-.-" evidence="1"/>
<dbReference type="EMBL" id="AY358024">
    <property type="protein sequence ID" value="AAQ55254.1"/>
    <property type="molecule type" value="Genomic_RNA"/>
</dbReference>
<dbReference type="EMBL" id="AY216504">
    <property type="protein sequence ID" value="AAP44540.2"/>
    <property type="molecule type" value="Genomic_RNA"/>
</dbReference>
<dbReference type="RefSeq" id="NP_899221.1">
    <property type="nucleotide sequence ID" value="NC_005082.1"/>
</dbReference>
<dbReference type="SMR" id="Q6UY70"/>
<dbReference type="KEGG" id="vg:2943171"/>
<dbReference type="Proteomes" id="UP000147629">
    <property type="component" value="Genome"/>
</dbReference>
<dbReference type="GO" id="GO:0030430">
    <property type="term" value="C:host cell cytoplasm"/>
    <property type="evidence" value="ECO:0007669"/>
    <property type="project" value="UniProtKB-SubCell"/>
</dbReference>
<dbReference type="GO" id="GO:0044423">
    <property type="term" value="C:virion component"/>
    <property type="evidence" value="ECO:0007669"/>
    <property type="project" value="UniProtKB-KW"/>
</dbReference>
<dbReference type="GO" id="GO:0016787">
    <property type="term" value="F:hydrolase activity"/>
    <property type="evidence" value="ECO:0007669"/>
    <property type="project" value="UniProtKB-KW"/>
</dbReference>
<dbReference type="GO" id="GO:0046872">
    <property type="term" value="F:metal ion binding"/>
    <property type="evidence" value="ECO:0007669"/>
    <property type="project" value="UniProtKB-KW"/>
</dbReference>
<dbReference type="GO" id="GO:0000166">
    <property type="term" value="F:nucleotide binding"/>
    <property type="evidence" value="ECO:0007669"/>
    <property type="project" value="UniProtKB-UniRule"/>
</dbReference>
<dbReference type="GO" id="GO:0003968">
    <property type="term" value="F:RNA-directed RNA polymerase activity"/>
    <property type="evidence" value="ECO:0007669"/>
    <property type="project" value="UniProtKB-UniRule"/>
</dbReference>
<dbReference type="GO" id="GO:0075526">
    <property type="term" value="P:cap snatching"/>
    <property type="evidence" value="ECO:0007669"/>
    <property type="project" value="UniProtKB-UniRule"/>
</dbReference>
<dbReference type="GO" id="GO:0039689">
    <property type="term" value="P:negative stranded viral RNA replication"/>
    <property type="evidence" value="ECO:0000250"/>
    <property type="project" value="UniProtKB"/>
</dbReference>
<dbReference type="GO" id="GO:0039696">
    <property type="term" value="P:RNA-templated viral transcription"/>
    <property type="evidence" value="ECO:0000250"/>
    <property type="project" value="UniProtKB"/>
</dbReference>
<dbReference type="FunFam" id="3.30.70.2640:FF:000001">
    <property type="entry name" value="RNA-directed RNA polymerase L"/>
    <property type="match status" value="1"/>
</dbReference>
<dbReference type="Gene3D" id="3.30.70.2640">
    <property type="entry name" value="Arenavirus RNA polymerase"/>
    <property type="match status" value="1"/>
</dbReference>
<dbReference type="Gene3D" id="1.20.1440.300">
    <property type="entry name" value="RNA-directed RNA polymerase L, helical domain"/>
    <property type="match status" value="1"/>
</dbReference>
<dbReference type="HAMAP" id="MF_04086">
    <property type="entry name" value="ARENA_L"/>
    <property type="match status" value="1"/>
</dbReference>
<dbReference type="InterPro" id="IPR026382">
    <property type="entry name" value="CapSnatch_arenavir"/>
</dbReference>
<dbReference type="InterPro" id="IPR048006">
    <property type="entry name" value="CapSnatch_bunyavir"/>
</dbReference>
<dbReference type="InterPro" id="IPR007099">
    <property type="entry name" value="RNA-dir_pol_NSvirus"/>
</dbReference>
<dbReference type="InterPro" id="IPR010453">
    <property type="entry name" value="RNA_pol_arenavir"/>
</dbReference>
<dbReference type="NCBIfam" id="TIGR04202">
    <property type="entry name" value="capSnatchArena"/>
    <property type="match status" value="1"/>
</dbReference>
<dbReference type="Pfam" id="PF06317">
    <property type="entry name" value="Arena_RNA_pol"/>
    <property type="match status" value="1"/>
</dbReference>
<dbReference type="Pfam" id="PF17296">
    <property type="entry name" value="ArenaCapSnatch"/>
    <property type="match status" value="1"/>
</dbReference>
<dbReference type="PIRSF" id="PIRSF000836">
    <property type="entry name" value="L_ArenaV"/>
    <property type="match status" value="1"/>
</dbReference>
<dbReference type="PROSITE" id="PS50525">
    <property type="entry name" value="RDRP_SSRNA_NEG_SEG"/>
    <property type="match status" value="1"/>
</dbReference>
<gene>
    <name evidence="1" type="primary">L</name>
</gene>